<organism>
    <name type="scientific">Neisseria meningitidis serogroup B (strain ATCC BAA-335 / MC58)</name>
    <dbReference type="NCBI Taxonomy" id="122586"/>
    <lineage>
        <taxon>Bacteria</taxon>
        <taxon>Pseudomonadati</taxon>
        <taxon>Pseudomonadota</taxon>
        <taxon>Betaproteobacteria</taxon>
        <taxon>Neisseriales</taxon>
        <taxon>Neisseriaceae</taxon>
        <taxon>Neisseria</taxon>
    </lineage>
</organism>
<sequence length="416" mass="44916">MFSKSVTLAQYDPDLAAAIAQEDQRQQDHVELIASENYVSCAVMDAQGSQLTNKYAEGYPGKRYYGGCEYVDIVEQLAIDRVKELFGAAYANVQPHSGSQANQAVYASVLKPGDTILGMSLAHGGHLTHGASVNISGKLYNAVTYGLDENEVLDYAEVERLALEHKPKMIVAGASAYALQIDWAKFREIADKVGAYLFVDMAHYAGLVAGGEYPNPVPFCDFVTTTTHKTLRGPRGGVILCRDNTHEKALNSSIFPSLQGGPLMHVIAAKAVAFKEALQPEFKQYAKQVKINAAAMAEELVKRGLRIVSGRTESHVFLVDLQPMKITGKAAEAALGKAHITVNKNAIPNDPEKPFVTSGIRIGSAAMTTRGFNEADARVLANLVADVLSNPEDEANLAKVRKQVTALCNKYPVYGA</sequence>
<feature type="chain" id="PRO_0000113623" description="Serine hydroxymethyltransferase">
    <location>
        <begin position="1"/>
        <end position="416"/>
    </location>
</feature>
<feature type="binding site" evidence="1">
    <location>
        <position position="121"/>
    </location>
    <ligand>
        <name>(6S)-5,6,7,8-tetrahydrofolate</name>
        <dbReference type="ChEBI" id="CHEBI:57453"/>
    </ligand>
</feature>
<feature type="binding site" evidence="1">
    <location>
        <begin position="125"/>
        <end position="127"/>
    </location>
    <ligand>
        <name>(6S)-5,6,7,8-tetrahydrofolate</name>
        <dbReference type="ChEBI" id="CHEBI:57453"/>
    </ligand>
</feature>
<feature type="site" description="Plays an important role in substrate specificity" evidence="1">
    <location>
        <position position="228"/>
    </location>
</feature>
<feature type="modified residue" description="N6-(pyridoxal phosphate)lysine" evidence="1">
    <location>
        <position position="229"/>
    </location>
</feature>
<reference key="1">
    <citation type="journal article" date="2000" name="Science">
        <title>Complete genome sequence of Neisseria meningitidis serogroup B strain MC58.</title>
        <authorList>
            <person name="Tettelin H."/>
            <person name="Saunders N.J."/>
            <person name="Heidelberg J.F."/>
            <person name="Jeffries A.C."/>
            <person name="Nelson K.E."/>
            <person name="Eisen J.A."/>
            <person name="Ketchum K.A."/>
            <person name="Hood D.W."/>
            <person name="Peden J.F."/>
            <person name="Dodson R.J."/>
            <person name="Nelson W.C."/>
            <person name="Gwinn M.L."/>
            <person name="DeBoy R.T."/>
            <person name="Peterson J.D."/>
            <person name="Hickey E.K."/>
            <person name="Haft D.H."/>
            <person name="Salzberg S.L."/>
            <person name="White O."/>
            <person name="Fleischmann R.D."/>
            <person name="Dougherty B.A."/>
            <person name="Mason T.M."/>
            <person name="Ciecko A."/>
            <person name="Parksey D.S."/>
            <person name="Blair E."/>
            <person name="Cittone H."/>
            <person name="Clark E.B."/>
            <person name="Cotton M.D."/>
            <person name="Utterback T.R."/>
            <person name="Khouri H.M."/>
            <person name="Qin H."/>
            <person name="Vamathevan J.J."/>
            <person name="Gill J."/>
            <person name="Scarlato V."/>
            <person name="Masignani V."/>
            <person name="Pizza M."/>
            <person name="Grandi G."/>
            <person name="Sun L."/>
            <person name="Smith H.O."/>
            <person name="Fraser C.M."/>
            <person name="Moxon E.R."/>
            <person name="Rappuoli R."/>
            <person name="Venter J.C."/>
        </authorList>
    </citation>
    <scope>NUCLEOTIDE SEQUENCE [LARGE SCALE GENOMIC DNA]</scope>
    <source>
        <strain>ATCC BAA-335 / MC58</strain>
    </source>
</reference>
<comment type="function">
    <text evidence="1">Catalyzes the reversible interconversion of serine and glycine with tetrahydrofolate (THF) serving as the one-carbon carrier. This reaction serves as the major source of one-carbon groups required for the biosynthesis of purines, thymidylate, methionine, and other important biomolecules. Also exhibits THF-independent aldolase activity toward beta-hydroxyamino acids, producing glycine and aldehydes, via a retro-aldol mechanism.</text>
</comment>
<comment type="catalytic activity">
    <reaction evidence="1">
        <text>(6R)-5,10-methylene-5,6,7,8-tetrahydrofolate + glycine + H2O = (6S)-5,6,7,8-tetrahydrofolate + L-serine</text>
        <dbReference type="Rhea" id="RHEA:15481"/>
        <dbReference type="ChEBI" id="CHEBI:15377"/>
        <dbReference type="ChEBI" id="CHEBI:15636"/>
        <dbReference type="ChEBI" id="CHEBI:33384"/>
        <dbReference type="ChEBI" id="CHEBI:57305"/>
        <dbReference type="ChEBI" id="CHEBI:57453"/>
        <dbReference type="EC" id="2.1.2.1"/>
    </reaction>
</comment>
<comment type="cofactor">
    <cofactor evidence="1">
        <name>pyridoxal 5'-phosphate</name>
        <dbReference type="ChEBI" id="CHEBI:597326"/>
    </cofactor>
</comment>
<comment type="pathway">
    <text evidence="1">One-carbon metabolism; tetrahydrofolate interconversion.</text>
</comment>
<comment type="pathway">
    <text evidence="1">Amino-acid biosynthesis; glycine biosynthesis; glycine from L-serine: step 1/1.</text>
</comment>
<comment type="subunit">
    <text evidence="1">Homodimer.</text>
</comment>
<comment type="subcellular location">
    <subcellularLocation>
        <location evidence="1">Cytoplasm</location>
    </subcellularLocation>
</comment>
<comment type="similarity">
    <text evidence="1">Belongs to the SHMT family.</text>
</comment>
<gene>
    <name evidence="1" type="primary">glyA</name>
    <name type="ordered locus">NMB1055</name>
</gene>
<proteinExistence type="inferred from homology"/>
<dbReference type="EC" id="2.1.2.1" evidence="1"/>
<dbReference type="EMBL" id="AE002098">
    <property type="protein sequence ID" value="AAF41452.1"/>
    <property type="molecule type" value="Genomic_DNA"/>
</dbReference>
<dbReference type="PIR" id="B81126">
    <property type="entry name" value="B81126"/>
</dbReference>
<dbReference type="RefSeq" id="NP_274089.1">
    <property type="nucleotide sequence ID" value="NC_003112.2"/>
</dbReference>
<dbReference type="RefSeq" id="WP_002225269.1">
    <property type="nucleotide sequence ID" value="NC_003112.2"/>
</dbReference>
<dbReference type="SMR" id="P56990"/>
<dbReference type="FunCoup" id="P56990">
    <property type="interactions" value="524"/>
</dbReference>
<dbReference type="STRING" id="122586.NMB1055"/>
<dbReference type="PaxDb" id="122586-NMB1055"/>
<dbReference type="KEGG" id="nme:NMB1055"/>
<dbReference type="PATRIC" id="fig|122586.8.peg.1342"/>
<dbReference type="HOGENOM" id="CLU_022477_2_1_4"/>
<dbReference type="InParanoid" id="P56990"/>
<dbReference type="OrthoDB" id="9803846at2"/>
<dbReference type="UniPathway" id="UPA00193"/>
<dbReference type="UniPathway" id="UPA00288">
    <property type="reaction ID" value="UER01023"/>
</dbReference>
<dbReference type="Proteomes" id="UP000000425">
    <property type="component" value="Chromosome"/>
</dbReference>
<dbReference type="GO" id="GO:0005737">
    <property type="term" value="C:cytoplasm"/>
    <property type="evidence" value="ECO:0000318"/>
    <property type="project" value="GO_Central"/>
</dbReference>
<dbReference type="GO" id="GO:0005829">
    <property type="term" value="C:cytosol"/>
    <property type="evidence" value="ECO:0000318"/>
    <property type="project" value="GO_Central"/>
</dbReference>
<dbReference type="GO" id="GO:0004372">
    <property type="term" value="F:glycine hydroxymethyltransferase activity"/>
    <property type="evidence" value="ECO:0000318"/>
    <property type="project" value="GO_Central"/>
</dbReference>
<dbReference type="GO" id="GO:0030170">
    <property type="term" value="F:pyridoxal phosphate binding"/>
    <property type="evidence" value="ECO:0000318"/>
    <property type="project" value="GO_Central"/>
</dbReference>
<dbReference type="GO" id="GO:0019264">
    <property type="term" value="P:glycine biosynthetic process from serine"/>
    <property type="evidence" value="ECO:0000318"/>
    <property type="project" value="GO_Central"/>
</dbReference>
<dbReference type="GO" id="GO:0035999">
    <property type="term" value="P:tetrahydrofolate interconversion"/>
    <property type="evidence" value="ECO:0007669"/>
    <property type="project" value="UniProtKB-UniRule"/>
</dbReference>
<dbReference type="GO" id="GO:0046653">
    <property type="term" value="P:tetrahydrofolate metabolic process"/>
    <property type="evidence" value="ECO:0000318"/>
    <property type="project" value="GO_Central"/>
</dbReference>
<dbReference type="CDD" id="cd00378">
    <property type="entry name" value="SHMT"/>
    <property type="match status" value="1"/>
</dbReference>
<dbReference type="FunFam" id="3.40.640.10:FF:000001">
    <property type="entry name" value="Serine hydroxymethyltransferase"/>
    <property type="match status" value="1"/>
</dbReference>
<dbReference type="FunFam" id="3.90.1150.10:FF:000003">
    <property type="entry name" value="Serine hydroxymethyltransferase"/>
    <property type="match status" value="1"/>
</dbReference>
<dbReference type="Gene3D" id="3.90.1150.10">
    <property type="entry name" value="Aspartate Aminotransferase, domain 1"/>
    <property type="match status" value="1"/>
</dbReference>
<dbReference type="Gene3D" id="3.40.640.10">
    <property type="entry name" value="Type I PLP-dependent aspartate aminotransferase-like (Major domain)"/>
    <property type="match status" value="1"/>
</dbReference>
<dbReference type="HAMAP" id="MF_00051">
    <property type="entry name" value="SHMT"/>
    <property type="match status" value="1"/>
</dbReference>
<dbReference type="InterPro" id="IPR015424">
    <property type="entry name" value="PyrdxlP-dep_Trfase"/>
</dbReference>
<dbReference type="InterPro" id="IPR015421">
    <property type="entry name" value="PyrdxlP-dep_Trfase_major"/>
</dbReference>
<dbReference type="InterPro" id="IPR015422">
    <property type="entry name" value="PyrdxlP-dep_Trfase_small"/>
</dbReference>
<dbReference type="InterPro" id="IPR001085">
    <property type="entry name" value="Ser_HO-MeTrfase"/>
</dbReference>
<dbReference type="InterPro" id="IPR049943">
    <property type="entry name" value="Ser_HO-MeTrfase-like"/>
</dbReference>
<dbReference type="InterPro" id="IPR019798">
    <property type="entry name" value="Ser_HO-MeTrfase_PLP_BS"/>
</dbReference>
<dbReference type="InterPro" id="IPR039429">
    <property type="entry name" value="SHMT-like_dom"/>
</dbReference>
<dbReference type="NCBIfam" id="NF000586">
    <property type="entry name" value="PRK00011.1"/>
    <property type="match status" value="1"/>
</dbReference>
<dbReference type="PANTHER" id="PTHR11680">
    <property type="entry name" value="SERINE HYDROXYMETHYLTRANSFERASE"/>
    <property type="match status" value="1"/>
</dbReference>
<dbReference type="PANTHER" id="PTHR11680:SF50">
    <property type="entry name" value="SERINE HYDROXYMETHYLTRANSFERASE"/>
    <property type="match status" value="1"/>
</dbReference>
<dbReference type="Pfam" id="PF00464">
    <property type="entry name" value="SHMT"/>
    <property type="match status" value="1"/>
</dbReference>
<dbReference type="PIRSF" id="PIRSF000412">
    <property type="entry name" value="SHMT"/>
    <property type="match status" value="1"/>
</dbReference>
<dbReference type="SUPFAM" id="SSF53383">
    <property type="entry name" value="PLP-dependent transferases"/>
    <property type="match status" value="1"/>
</dbReference>
<dbReference type="PROSITE" id="PS00096">
    <property type="entry name" value="SHMT"/>
    <property type="match status" value="1"/>
</dbReference>
<evidence type="ECO:0000255" key="1">
    <source>
        <dbReference type="HAMAP-Rule" id="MF_00051"/>
    </source>
</evidence>
<name>GLYA_NEIMB</name>
<protein>
    <recommendedName>
        <fullName evidence="1">Serine hydroxymethyltransferase</fullName>
        <shortName evidence="1">SHMT</shortName>
        <shortName evidence="1">Serine methylase</shortName>
        <ecNumber evidence="1">2.1.2.1</ecNumber>
    </recommendedName>
</protein>
<accession>P56990</accession>
<keyword id="KW-0028">Amino-acid biosynthesis</keyword>
<keyword id="KW-0963">Cytoplasm</keyword>
<keyword id="KW-0554">One-carbon metabolism</keyword>
<keyword id="KW-0663">Pyridoxal phosphate</keyword>
<keyword id="KW-1185">Reference proteome</keyword>
<keyword id="KW-0808">Transferase</keyword>